<dbReference type="EC" id="2.2.1.7" evidence="1"/>
<dbReference type="EMBL" id="AE017283">
    <property type="protein sequence ID" value="AAT82813.1"/>
    <property type="status" value="ALT_INIT"/>
    <property type="molecule type" value="Genomic_DNA"/>
</dbReference>
<dbReference type="SMR" id="Q6A8V3"/>
<dbReference type="EnsemblBacteria" id="AAT82813">
    <property type="protein sequence ID" value="AAT82813"/>
    <property type="gene ID" value="PPA1062"/>
</dbReference>
<dbReference type="KEGG" id="pac:PPA1062"/>
<dbReference type="eggNOG" id="COG1154">
    <property type="taxonomic scope" value="Bacteria"/>
</dbReference>
<dbReference type="HOGENOM" id="CLU_009227_1_4_11"/>
<dbReference type="UniPathway" id="UPA00064">
    <property type="reaction ID" value="UER00091"/>
</dbReference>
<dbReference type="Proteomes" id="UP000000603">
    <property type="component" value="Chromosome"/>
</dbReference>
<dbReference type="GO" id="GO:0005829">
    <property type="term" value="C:cytosol"/>
    <property type="evidence" value="ECO:0007669"/>
    <property type="project" value="TreeGrafter"/>
</dbReference>
<dbReference type="GO" id="GO:0008661">
    <property type="term" value="F:1-deoxy-D-xylulose-5-phosphate synthase activity"/>
    <property type="evidence" value="ECO:0007669"/>
    <property type="project" value="UniProtKB-UniRule"/>
</dbReference>
<dbReference type="GO" id="GO:0000287">
    <property type="term" value="F:magnesium ion binding"/>
    <property type="evidence" value="ECO:0007669"/>
    <property type="project" value="UniProtKB-UniRule"/>
</dbReference>
<dbReference type="GO" id="GO:0030976">
    <property type="term" value="F:thiamine pyrophosphate binding"/>
    <property type="evidence" value="ECO:0007669"/>
    <property type="project" value="UniProtKB-UniRule"/>
</dbReference>
<dbReference type="GO" id="GO:0052865">
    <property type="term" value="P:1-deoxy-D-xylulose 5-phosphate biosynthetic process"/>
    <property type="evidence" value="ECO:0007669"/>
    <property type="project" value="UniProtKB-UniPathway"/>
</dbReference>
<dbReference type="GO" id="GO:0019288">
    <property type="term" value="P:isopentenyl diphosphate biosynthetic process, methylerythritol 4-phosphate pathway"/>
    <property type="evidence" value="ECO:0007669"/>
    <property type="project" value="TreeGrafter"/>
</dbReference>
<dbReference type="GO" id="GO:0016114">
    <property type="term" value="P:terpenoid biosynthetic process"/>
    <property type="evidence" value="ECO:0007669"/>
    <property type="project" value="UniProtKB-UniRule"/>
</dbReference>
<dbReference type="GO" id="GO:0009228">
    <property type="term" value="P:thiamine biosynthetic process"/>
    <property type="evidence" value="ECO:0007669"/>
    <property type="project" value="UniProtKB-UniRule"/>
</dbReference>
<dbReference type="CDD" id="cd02007">
    <property type="entry name" value="TPP_DXS"/>
    <property type="match status" value="1"/>
</dbReference>
<dbReference type="CDD" id="cd07033">
    <property type="entry name" value="TPP_PYR_DXS_TK_like"/>
    <property type="match status" value="1"/>
</dbReference>
<dbReference type="Gene3D" id="3.40.50.920">
    <property type="match status" value="1"/>
</dbReference>
<dbReference type="Gene3D" id="3.40.50.970">
    <property type="match status" value="2"/>
</dbReference>
<dbReference type="HAMAP" id="MF_00315">
    <property type="entry name" value="DXP_synth"/>
    <property type="match status" value="1"/>
</dbReference>
<dbReference type="InterPro" id="IPR005477">
    <property type="entry name" value="Dxylulose-5-P_synthase"/>
</dbReference>
<dbReference type="InterPro" id="IPR029061">
    <property type="entry name" value="THDP-binding"/>
</dbReference>
<dbReference type="InterPro" id="IPR009014">
    <property type="entry name" value="Transketo_C/PFOR_II"/>
</dbReference>
<dbReference type="InterPro" id="IPR005475">
    <property type="entry name" value="Transketolase-like_Pyr-bd"/>
</dbReference>
<dbReference type="InterPro" id="IPR020826">
    <property type="entry name" value="Transketolase_BS"/>
</dbReference>
<dbReference type="InterPro" id="IPR033248">
    <property type="entry name" value="Transketolase_C"/>
</dbReference>
<dbReference type="InterPro" id="IPR049557">
    <property type="entry name" value="Transketolase_CS"/>
</dbReference>
<dbReference type="NCBIfam" id="TIGR00204">
    <property type="entry name" value="dxs"/>
    <property type="match status" value="1"/>
</dbReference>
<dbReference type="NCBIfam" id="NF003933">
    <property type="entry name" value="PRK05444.2-2"/>
    <property type="match status" value="1"/>
</dbReference>
<dbReference type="PANTHER" id="PTHR43322">
    <property type="entry name" value="1-D-DEOXYXYLULOSE 5-PHOSPHATE SYNTHASE-RELATED"/>
    <property type="match status" value="1"/>
</dbReference>
<dbReference type="PANTHER" id="PTHR43322:SF5">
    <property type="entry name" value="1-DEOXY-D-XYLULOSE-5-PHOSPHATE SYNTHASE, CHLOROPLASTIC"/>
    <property type="match status" value="1"/>
</dbReference>
<dbReference type="Pfam" id="PF13292">
    <property type="entry name" value="DXP_synthase_N"/>
    <property type="match status" value="1"/>
</dbReference>
<dbReference type="Pfam" id="PF02779">
    <property type="entry name" value="Transket_pyr"/>
    <property type="match status" value="1"/>
</dbReference>
<dbReference type="Pfam" id="PF02780">
    <property type="entry name" value="Transketolase_C"/>
    <property type="match status" value="1"/>
</dbReference>
<dbReference type="SMART" id="SM00861">
    <property type="entry name" value="Transket_pyr"/>
    <property type="match status" value="1"/>
</dbReference>
<dbReference type="SUPFAM" id="SSF52518">
    <property type="entry name" value="Thiamin diphosphate-binding fold (THDP-binding)"/>
    <property type="match status" value="2"/>
</dbReference>
<dbReference type="SUPFAM" id="SSF52922">
    <property type="entry name" value="TK C-terminal domain-like"/>
    <property type="match status" value="1"/>
</dbReference>
<dbReference type="PROSITE" id="PS00801">
    <property type="entry name" value="TRANSKETOLASE_1"/>
    <property type="match status" value="1"/>
</dbReference>
<dbReference type="PROSITE" id="PS00802">
    <property type="entry name" value="TRANSKETOLASE_2"/>
    <property type="match status" value="1"/>
</dbReference>
<feature type="chain" id="PRO_0000256455" description="1-deoxy-D-xylulose-5-phosphate synthase">
    <location>
        <begin position="1"/>
        <end position="627"/>
    </location>
</feature>
<feature type="binding site" evidence="1">
    <location>
        <position position="76"/>
    </location>
    <ligand>
        <name>thiamine diphosphate</name>
        <dbReference type="ChEBI" id="CHEBI:58937"/>
    </ligand>
</feature>
<feature type="binding site" evidence="1">
    <location>
        <begin position="117"/>
        <end position="119"/>
    </location>
    <ligand>
        <name>thiamine diphosphate</name>
        <dbReference type="ChEBI" id="CHEBI:58937"/>
    </ligand>
</feature>
<feature type="binding site" evidence="1">
    <location>
        <position position="148"/>
    </location>
    <ligand>
        <name>Mg(2+)</name>
        <dbReference type="ChEBI" id="CHEBI:18420"/>
    </ligand>
</feature>
<feature type="binding site" evidence="1">
    <location>
        <begin position="149"/>
        <end position="150"/>
    </location>
    <ligand>
        <name>thiamine diphosphate</name>
        <dbReference type="ChEBI" id="CHEBI:58937"/>
    </ligand>
</feature>
<feature type="binding site" evidence="1">
    <location>
        <position position="178"/>
    </location>
    <ligand>
        <name>Mg(2+)</name>
        <dbReference type="ChEBI" id="CHEBI:18420"/>
    </ligand>
</feature>
<feature type="binding site" evidence="1">
    <location>
        <position position="178"/>
    </location>
    <ligand>
        <name>thiamine diphosphate</name>
        <dbReference type="ChEBI" id="CHEBI:58937"/>
    </ligand>
</feature>
<feature type="binding site" evidence="1">
    <location>
        <position position="288"/>
    </location>
    <ligand>
        <name>thiamine diphosphate</name>
        <dbReference type="ChEBI" id="CHEBI:58937"/>
    </ligand>
</feature>
<feature type="binding site" evidence="1">
    <location>
        <position position="370"/>
    </location>
    <ligand>
        <name>thiamine diphosphate</name>
        <dbReference type="ChEBI" id="CHEBI:58937"/>
    </ligand>
</feature>
<gene>
    <name evidence="1" type="primary">dxs</name>
    <name type="ordered locus">PPA1062</name>
</gene>
<accession>Q6A8V3</accession>
<sequence>MPRMALLDDIGCPDDVRKLTTKQAEDLAEEIRAFLIDKVSRTGGHLGPNLGVVELTIALHRVFDSPHDPIIFDTGHQSYVHKILTGRANGFEKLRQRGGLSGYPSRAESVHDWVENSHASASLSWAEGMAKGFLSQGEDRTVVAVIGDGALTGGMAWEALNSIADQQGLRLVIVVNDNGRSYTPTVGGLANQLAIIRTDPHYEEALDRMKRHVTDKPLGKQVFGLMHAAKAGVKDALIGNGIFSDLGIKYLGPVDGHDVLSVERALELAKRYGHPVIVHVMTTKGKGFAAAEANEEDHFHAVGRIDPVTGASLKASGGASWTQAFAGAMVELGERRPDIVGVTAAMLHPVGLAPFAARHPDRVLDVGIAEQHAVTSAAGMAAAGLHPVVALYSTFLNRAFDQLLMDAGLHHAGVTIVLDRAGITGTDGASHNGMWDMAMCGIVPGLMLSAPRDRQHLVSVLNEAVDIDDRPTVIRYSKDPIPDDIRIVTSHDGLDVLCDGPEDGILLVAHGQLCAEALAAVDQLDSPVRVVSPRWSLPVCGGLIEEAARARAVVSVEDGLVVSGLGSHLADALSQRGMWRPIRSLGIPQRYLDHDSRSAIMAELGLDSRGIADAVSQLVAQLDGEYS</sequence>
<protein>
    <recommendedName>
        <fullName evidence="1">1-deoxy-D-xylulose-5-phosphate synthase</fullName>
        <ecNumber evidence="1">2.2.1.7</ecNumber>
    </recommendedName>
    <alternativeName>
        <fullName evidence="1">1-deoxyxylulose-5-phosphate synthase</fullName>
        <shortName evidence="1">DXP synthase</shortName>
        <shortName evidence="1">DXPS</shortName>
    </alternativeName>
</protein>
<proteinExistence type="inferred from homology"/>
<name>DXS_CUTAK</name>
<organism>
    <name type="scientific">Cutibacterium acnes (strain DSM 16379 / KPA171202)</name>
    <name type="common">Propionibacterium acnes</name>
    <dbReference type="NCBI Taxonomy" id="267747"/>
    <lineage>
        <taxon>Bacteria</taxon>
        <taxon>Bacillati</taxon>
        <taxon>Actinomycetota</taxon>
        <taxon>Actinomycetes</taxon>
        <taxon>Propionibacteriales</taxon>
        <taxon>Propionibacteriaceae</taxon>
        <taxon>Cutibacterium</taxon>
    </lineage>
</organism>
<evidence type="ECO:0000255" key="1">
    <source>
        <dbReference type="HAMAP-Rule" id="MF_00315"/>
    </source>
</evidence>
<evidence type="ECO:0000305" key="2"/>
<keyword id="KW-0414">Isoprene biosynthesis</keyword>
<keyword id="KW-0460">Magnesium</keyword>
<keyword id="KW-0479">Metal-binding</keyword>
<keyword id="KW-0784">Thiamine biosynthesis</keyword>
<keyword id="KW-0786">Thiamine pyrophosphate</keyword>
<keyword id="KW-0808">Transferase</keyword>
<reference key="1">
    <citation type="journal article" date="2004" name="Science">
        <title>The complete genome sequence of Propionibacterium acnes, a commensal of human skin.</title>
        <authorList>
            <person name="Brueggemann H."/>
            <person name="Henne A."/>
            <person name="Hoster F."/>
            <person name="Liesegang H."/>
            <person name="Wiezer A."/>
            <person name="Strittmatter A."/>
            <person name="Hujer S."/>
            <person name="Duerre P."/>
            <person name="Gottschalk G."/>
        </authorList>
    </citation>
    <scope>NUCLEOTIDE SEQUENCE [LARGE SCALE GENOMIC DNA]</scope>
    <source>
        <strain>DSM 16379 / KPA171202</strain>
    </source>
</reference>
<comment type="function">
    <text evidence="1">Catalyzes the acyloin condensation reaction between C atoms 2 and 3 of pyruvate and glyceraldehyde 3-phosphate to yield 1-deoxy-D-xylulose-5-phosphate (DXP).</text>
</comment>
<comment type="catalytic activity">
    <reaction evidence="1">
        <text>D-glyceraldehyde 3-phosphate + pyruvate + H(+) = 1-deoxy-D-xylulose 5-phosphate + CO2</text>
        <dbReference type="Rhea" id="RHEA:12605"/>
        <dbReference type="ChEBI" id="CHEBI:15361"/>
        <dbReference type="ChEBI" id="CHEBI:15378"/>
        <dbReference type="ChEBI" id="CHEBI:16526"/>
        <dbReference type="ChEBI" id="CHEBI:57792"/>
        <dbReference type="ChEBI" id="CHEBI:59776"/>
        <dbReference type="EC" id="2.2.1.7"/>
    </reaction>
</comment>
<comment type="cofactor">
    <cofactor evidence="1">
        <name>Mg(2+)</name>
        <dbReference type="ChEBI" id="CHEBI:18420"/>
    </cofactor>
    <text evidence="1">Binds 1 Mg(2+) ion per subunit.</text>
</comment>
<comment type="cofactor">
    <cofactor evidence="1">
        <name>thiamine diphosphate</name>
        <dbReference type="ChEBI" id="CHEBI:58937"/>
    </cofactor>
    <text evidence="1">Binds 1 thiamine pyrophosphate per subunit.</text>
</comment>
<comment type="pathway">
    <text evidence="1">Metabolic intermediate biosynthesis; 1-deoxy-D-xylulose 5-phosphate biosynthesis; 1-deoxy-D-xylulose 5-phosphate from D-glyceraldehyde 3-phosphate and pyruvate: step 1/1.</text>
</comment>
<comment type="subunit">
    <text evidence="1">Homodimer.</text>
</comment>
<comment type="similarity">
    <text evidence="1">Belongs to the transketolase family. DXPS subfamily.</text>
</comment>
<comment type="sequence caution" evidence="2">
    <conflict type="erroneous initiation">
        <sequence resource="EMBL-CDS" id="AAT82813"/>
    </conflict>
</comment>